<feature type="chain" id="PRO_0000060454" description="tRNA (guanine-N(1)-)-methyltransferase">
    <location>
        <begin position="1"/>
        <end position="243"/>
    </location>
</feature>
<feature type="binding site" evidence="1">
    <location>
        <position position="123"/>
    </location>
    <ligand>
        <name>S-adenosyl-L-methionine</name>
        <dbReference type="ChEBI" id="CHEBI:59789"/>
    </ligand>
</feature>
<feature type="binding site" evidence="1">
    <location>
        <begin position="143"/>
        <end position="148"/>
    </location>
    <ligand>
        <name>S-adenosyl-L-methionine</name>
        <dbReference type="ChEBI" id="CHEBI:59789"/>
    </ligand>
</feature>
<reference key="1">
    <citation type="journal article" date="2004" name="Nature">
        <title>Genome sequence of Silicibacter pomeroyi reveals adaptations to the marine environment.</title>
        <authorList>
            <person name="Moran M.A."/>
            <person name="Buchan A."/>
            <person name="Gonzalez J.M."/>
            <person name="Heidelberg J.F."/>
            <person name="Whitman W.B."/>
            <person name="Kiene R.P."/>
            <person name="Henriksen J.R."/>
            <person name="King G.M."/>
            <person name="Belas R."/>
            <person name="Fuqua C."/>
            <person name="Brinkac L.M."/>
            <person name="Lewis M."/>
            <person name="Johri S."/>
            <person name="Weaver B."/>
            <person name="Pai G."/>
            <person name="Eisen J.A."/>
            <person name="Rahe E."/>
            <person name="Sheldon W.M."/>
            <person name="Ye W."/>
            <person name="Miller T.R."/>
            <person name="Carlton J."/>
            <person name="Rasko D.A."/>
            <person name="Paulsen I.T."/>
            <person name="Ren Q."/>
            <person name="Daugherty S.C."/>
            <person name="DeBoy R.T."/>
            <person name="Dodson R.J."/>
            <person name="Durkin A.S."/>
            <person name="Madupu R."/>
            <person name="Nelson W.C."/>
            <person name="Sullivan S.A."/>
            <person name="Rosovitz M.J."/>
            <person name="Haft D.H."/>
            <person name="Selengut J."/>
            <person name="Ward N."/>
        </authorList>
    </citation>
    <scope>NUCLEOTIDE SEQUENCE [LARGE SCALE GENOMIC DNA]</scope>
    <source>
        <strain>ATCC 700808 / DSM 15171 / DSS-3</strain>
    </source>
</reference>
<reference key="2">
    <citation type="journal article" date="2014" name="Stand. Genomic Sci.">
        <title>An updated genome annotation for the model marine bacterium Ruegeria pomeroyi DSS-3.</title>
        <authorList>
            <person name="Rivers A.R."/>
            <person name="Smith C.B."/>
            <person name="Moran M.A."/>
        </authorList>
    </citation>
    <scope>GENOME REANNOTATION</scope>
    <source>
        <strain>ATCC 700808 / DSM 15171 / DSS-3</strain>
    </source>
</reference>
<keyword id="KW-0963">Cytoplasm</keyword>
<keyword id="KW-0489">Methyltransferase</keyword>
<keyword id="KW-1185">Reference proteome</keyword>
<keyword id="KW-0949">S-adenosyl-L-methionine</keyword>
<keyword id="KW-0808">Transferase</keyword>
<keyword id="KW-0819">tRNA processing</keyword>
<accession>Q5LNE6</accession>
<protein>
    <recommendedName>
        <fullName evidence="1">tRNA (guanine-N(1)-)-methyltransferase</fullName>
        <ecNumber evidence="1">2.1.1.228</ecNumber>
    </recommendedName>
    <alternativeName>
        <fullName evidence="1">M1G-methyltransferase</fullName>
    </alternativeName>
    <alternativeName>
        <fullName evidence="1">tRNA [GM37] methyltransferase</fullName>
    </alternativeName>
</protein>
<gene>
    <name evidence="1" type="primary">trmD</name>
    <name type="ordered locus">SPO3259</name>
</gene>
<dbReference type="EC" id="2.1.1.228" evidence="1"/>
<dbReference type="EMBL" id="CP000031">
    <property type="protein sequence ID" value="AAV96494.1"/>
    <property type="molecule type" value="Genomic_DNA"/>
</dbReference>
<dbReference type="SMR" id="Q5LNE6"/>
<dbReference type="STRING" id="246200.SPO3259"/>
<dbReference type="PaxDb" id="246200-SPO3259"/>
<dbReference type="KEGG" id="sil:SPO3259"/>
<dbReference type="eggNOG" id="COG0336">
    <property type="taxonomic scope" value="Bacteria"/>
</dbReference>
<dbReference type="HOGENOM" id="CLU_047363_0_1_5"/>
<dbReference type="Proteomes" id="UP000001023">
    <property type="component" value="Chromosome"/>
</dbReference>
<dbReference type="GO" id="GO:0005829">
    <property type="term" value="C:cytosol"/>
    <property type="evidence" value="ECO:0007669"/>
    <property type="project" value="TreeGrafter"/>
</dbReference>
<dbReference type="GO" id="GO:0052906">
    <property type="term" value="F:tRNA (guanine(37)-N1)-methyltransferase activity"/>
    <property type="evidence" value="ECO:0007669"/>
    <property type="project" value="UniProtKB-UniRule"/>
</dbReference>
<dbReference type="GO" id="GO:0002939">
    <property type="term" value="P:tRNA N1-guanine methylation"/>
    <property type="evidence" value="ECO:0007669"/>
    <property type="project" value="TreeGrafter"/>
</dbReference>
<dbReference type="CDD" id="cd18080">
    <property type="entry name" value="TrmD-like"/>
    <property type="match status" value="1"/>
</dbReference>
<dbReference type="Gene3D" id="3.40.1280.10">
    <property type="match status" value="1"/>
</dbReference>
<dbReference type="Gene3D" id="1.10.1270.20">
    <property type="entry name" value="tRNA(m1g37)methyltransferase, domain 2"/>
    <property type="match status" value="1"/>
</dbReference>
<dbReference type="HAMAP" id="MF_00605">
    <property type="entry name" value="TrmD"/>
    <property type="match status" value="1"/>
</dbReference>
<dbReference type="InterPro" id="IPR029028">
    <property type="entry name" value="Alpha/beta_knot_MTases"/>
</dbReference>
<dbReference type="InterPro" id="IPR023148">
    <property type="entry name" value="tRNA_m1G_MeTrfase_C_sf"/>
</dbReference>
<dbReference type="InterPro" id="IPR002649">
    <property type="entry name" value="tRNA_m1G_MeTrfase_TrmD"/>
</dbReference>
<dbReference type="InterPro" id="IPR029026">
    <property type="entry name" value="tRNA_m1G_MTases_N"/>
</dbReference>
<dbReference type="InterPro" id="IPR016009">
    <property type="entry name" value="tRNA_MeTrfase_TRMD/TRM10"/>
</dbReference>
<dbReference type="NCBIfam" id="NF000648">
    <property type="entry name" value="PRK00026.1"/>
    <property type="match status" value="1"/>
</dbReference>
<dbReference type="NCBIfam" id="TIGR00088">
    <property type="entry name" value="trmD"/>
    <property type="match status" value="1"/>
</dbReference>
<dbReference type="PANTHER" id="PTHR46417">
    <property type="entry name" value="TRNA (GUANINE-N(1)-)-METHYLTRANSFERASE"/>
    <property type="match status" value="1"/>
</dbReference>
<dbReference type="PANTHER" id="PTHR46417:SF1">
    <property type="entry name" value="TRNA (GUANINE-N(1)-)-METHYLTRANSFERASE"/>
    <property type="match status" value="1"/>
</dbReference>
<dbReference type="Pfam" id="PF01746">
    <property type="entry name" value="tRNA_m1G_MT"/>
    <property type="match status" value="1"/>
</dbReference>
<dbReference type="PIRSF" id="PIRSF000386">
    <property type="entry name" value="tRNA_mtase"/>
    <property type="match status" value="1"/>
</dbReference>
<dbReference type="SUPFAM" id="SSF75217">
    <property type="entry name" value="alpha/beta knot"/>
    <property type="match status" value="1"/>
</dbReference>
<evidence type="ECO:0000255" key="1">
    <source>
        <dbReference type="HAMAP-Rule" id="MF_00605"/>
    </source>
</evidence>
<sequence length="243" mass="26782">MTPTPELHGVWQARIITLFPQAFPGVLGESLTGKALQDGLWQLHTTDLRRFGVGKHRNVDDTPAGGGAGMVLRPDVLGAAIEATMQGTSSNWPLIYLSPRGRPMDQALMQSLARCDGVTLLCGRFEGVDERVLEHYGIQEVSLGDFVMTGGEIAAQALIDATVRLLPGVLGNQASTEEESFSSGLLEHPQYTRPAEWMGRPIPEVLMSGHHGKVAEWRRAQSEEITRRRRPDLWQRHQATKDD</sequence>
<name>TRMD_RUEPO</name>
<comment type="function">
    <text evidence="1">Specifically methylates guanosine-37 in various tRNAs.</text>
</comment>
<comment type="catalytic activity">
    <reaction evidence="1">
        <text>guanosine(37) in tRNA + S-adenosyl-L-methionine = N(1)-methylguanosine(37) in tRNA + S-adenosyl-L-homocysteine + H(+)</text>
        <dbReference type="Rhea" id="RHEA:36899"/>
        <dbReference type="Rhea" id="RHEA-COMP:10145"/>
        <dbReference type="Rhea" id="RHEA-COMP:10147"/>
        <dbReference type="ChEBI" id="CHEBI:15378"/>
        <dbReference type="ChEBI" id="CHEBI:57856"/>
        <dbReference type="ChEBI" id="CHEBI:59789"/>
        <dbReference type="ChEBI" id="CHEBI:73542"/>
        <dbReference type="ChEBI" id="CHEBI:74269"/>
        <dbReference type="EC" id="2.1.1.228"/>
    </reaction>
</comment>
<comment type="subunit">
    <text evidence="1">Homodimer.</text>
</comment>
<comment type="subcellular location">
    <subcellularLocation>
        <location evidence="1">Cytoplasm</location>
    </subcellularLocation>
</comment>
<comment type="similarity">
    <text evidence="1">Belongs to the RNA methyltransferase TrmD family.</text>
</comment>
<organism>
    <name type="scientific">Ruegeria pomeroyi (strain ATCC 700808 / DSM 15171 / DSS-3)</name>
    <name type="common">Silicibacter pomeroyi</name>
    <dbReference type="NCBI Taxonomy" id="246200"/>
    <lineage>
        <taxon>Bacteria</taxon>
        <taxon>Pseudomonadati</taxon>
        <taxon>Pseudomonadota</taxon>
        <taxon>Alphaproteobacteria</taxon>
        <taxon>Rhodobacterales</taxon>
        <taxon>Roseobacteraceae</taxon>
        <taxon>Ruegeria</taxon>
    </lineage>
</organism>
<proteinExistence type="inferred from homology"/>